<reference key="1">
    <citation type="journal article" date="2009" name="PLoS ONE">
        <title>Salmonella paratyphi C: genetic divergence from Salmonella choleraesuis and pathogenic convergence with Salmonella typhi.</title>
        <authorList>
            <person name="Liu W.-Q."/>
            <person name="Feng Y."/>
            <person name="Wang Y."/>
            <person name="Zou Q.-H."/>
            <person name="Chen F."/>
            <person name="Guo J.-T."/>
            <person name="Peng Y.-H."/>
            <person name="Jin Y."/>
            <person name="Li Y.-G."/>
            <person name="Hu S.-N."/>
            <person name="Johnston R.N."/>
            <person name="Liu G.-R."/>
            <person name="Liu S.-L."/>
        </authorList>
    </citation>
    <scope>NUCLEOTIDE SEQUENCE [LARGE SCALE GENOMIC DNA]</scope>
    <source>
        <strain>RKS4594</strain>
    </source>
</reference>
<protein>
    <recommendedName>
        <fullName evidence="1">Endo-type membrane-bound lytic murein transglycosylase A</fullName>
        <ecNumber evidence="1">4.2.2.n2</ecNumber>
    </recommendedName>
    <alternativeName>
        <fullName evidence="1">Peptidoglycan lytic endotransglycosylase</fullName>
    </alternativeName>
</protein>
<dbReference type="EC" id="4.2.2.n2" evidence="1"/>
<dbReference type="EMBL" id="CP000857">
    <property type="protein sequence ID" value="ACN46066.1"/>
    <property type="molecule type" value="Genomic_DNA"/>
</dbReference>
<dbReference type="RefSeq" id="WP_000776974.1">
    <property type="nucleotide sequence ID" value="NC_012125.1"/>
</dbReference>
<dbReference type="SMR" id="C0Q334"/>
<dbReference type="CAZy" id="GH23">
    <property type="family name" value="Glycoside Hydrolase Family 23"/>
</dbReference>
<dbReference type="KEGG" id="sei:SPC_1930"/>
<dbReference type="HOGENOM" id="CLU_103257_0_0_6"/>
<dbReference type="Proteomes" id="UP000001599">
    <property type="component" value="Chromosome"/>
</dbReference>
<dbReference type="GO" id="GO:0009279">
    <property type="term" value="C:cell outer membrane"/>
    <property type="evidence" value="ECO:0007669"/>
    <property type="project" value="UniProtKB-SubCell"/>
</dbReference>
<dbReference type="GO" id="GO:0008932">
    <property type="term" value="F:lytic endotransglycosylase activity"/>
    <property type="evidence" value="ECO:0007669"/>
    <property type="project" value="InterPro"/>
</dbReference>
<dbReference type="GO" id="GO:0016998">
    <property type="term" value="P:cell wall macromolecule catabolic process"/>
    <property type="evidence" value="ECO:0007669"/>
    <property type="project" value="UniProtKB-UniRule"/>
</dbReference>
<dbReference type="GO" id="GO:0071555">
    <property type="term" value="P:cell wall organization"/>
    <property type="evidence" value="ECO:0007669"/>
    <property type="project" value="UniProtKB-KW"/>
</dbReference>
<dbReference type="GO" id="GO:0000270">
    <property type="term" value="P:peptidoglycan metabolic process"/>
    <property type="evidence" value="ECO:0007669"/>
    <property type="project" value="InterPro"/>
</dbReference>
<dbReference type="CDD" id="cd16893">
    <property type="entry name" value="LT_MltC_MltE"/>
    <property type="match status" value="1"/>
</dbReference>
<dbReference type="Gene3D" id="1.10.530.10">
    <property type="match status" value="1"/>
</dbReference>
<dbReference type="HAMAP" id="MF_01381">
    <property type="entry name" value="EmtA"/>
    <property type="match status" value="1"/>
</dbReference>
<dbReference type="InterPro" id="IPR023946">
    <property type="entry name" value="EmtA"/>
</dbReference>
<dbReference type="InterPro" id="IPR023346">
    <property type="entry name" value="Lysozyme-like_dom_sf"/>
</dbReference>
<dbReference type="InterPro" id="IPR000189">
    <property type="entry name" value="Transglyc_AS"/>
</dbReference>
<dbReference type="InterPro" id="IPR008258">
    <property type="entry name" value="Transglycosylase_SLT_dom_1"/>
</dbReference>
<dbReference type="NCBIfam" id="NF012014">
    <property type="entry name" value="PRK15470.1"/>
    <property type="match status" value="1"/>
</dbReference>
<dbReference type="PANTHER" id="PTHR37423:SF4">
    <property type="entry name" value="ENDO-TYPE MEMBRANE-BOUND LYTIC MUREIN TRANSGLYCOSYLASE A"/>
    <property type="match status" value="1"/>
</dbReference>
<dbReference type="PANTHER" id="PTHR37423">
    <property type="entry name" value="SOLUBLE LYTIC MUREIN TRANSGLYCOSYLASE-RELATED"/>
    <property type="match status" value="1"/>
</dbReference>
<dbReference type="Pfam" id="PF01464">
    <property type="entry name" value="SLT"/>
    <property type="match status" value="1"/>
</dbReference>
<dbReference type="SUPFAM" id="SSF53955">
    <property type="entry name" value="Lysozyme-like"/>
    <property type="match status" value="1"/>
</dbReference>
<dbReference type="PROSITE" id="PS51257">
    <property type="entry name" value="PROKAR_LIPOPROTEIN"/>
    <property type="match status" value="1"/>
</dbReference>
<dbReference type="PROSITE" id="PS00922">
    <property type="entry name" value="TRANSGLYCOSYLASE"/>
    <property type="match status" value="1"/>
</dbReference>
<organism>
    <name type="scientific">Salmonella paratyphi C (strain RKS4594)</name>
    <dbReference type="NCBI Taxonomy" id="476213"/>
    <lineage>
        <taxon>Bacteria</taxon>
        <taxon>Pseudomonadati</taxon>
        <taxon>Pseudomonadota</taxon>
        <taxon>Gammaproteobacteria</taxon>
        <taxon>Enterobacterales</taxon>
        <taxon>Enterobacteriaceae</taxon>
        <taxon>Salmonella</taxon>
    </lineage>
</organism>
<comment type="function">
    <text evidence="1">Murein-degrading enzyme. May play a role in recycling of muropeptides during cell elongation and/or cell division. Preferentially cleaves at a distance of more than two disaccharide units from the ends of the glycan chain.</text>
</comment>
<comment type="catalytic activity">
    <reaction evidence="1">
        <text>Endolytic cleavage of the (1-&gt;4)-beta-glycosidic linkage between N-acetylmuramic acid (MurNAc) and N-acetylglucosamine (GlcNAc) residues in peptidoglycan with concomitant formation of a 1,6-anhydrobond in the MurNAc residue.</text>
        <dbReference type="EC" id="4.2.2.n2"/>
    </reaction>
</comment>
<comment type="subcellular location">
    <subcellularLocation>
        <location evidence="1">Cell outer membrane</location>
        <topology evidence="1">Lipid-anchor</topology>
    </subcellularLocation>
</comment>
<comment type="similarity">
    <text evidence="1">Belongs to the transglycosylase Slt family.</text>
</comment>
<proteinExistence type="inferred from homology"/>
<gene>
    <name evidence="1" type="primary">emtA</name>
    <name type="ordered locus">SPC_1930</name>
</gene>
<accession>C0Q334</accession>
<evidence type="ECO:0000255" key="1">
    <source>
        <dbReference type="HAMAP-Rule" id="MF_01381"/>
    </source>
</evidence>
<keyword id="KW-0998">Cell outer membrane</keyword>
<keyword id="KW-0961">Cell wall biogenesis/degradation</keyword>
<keyword id="KW-0449">Lipoprotein</keyword>
<keyword id="KW-0456">Lyase</keyword>
<keyword id="KW-0472">Membrane</keyword>
<keyword id="KW-0564">Palmitate</keyword>
<keyword id="KW-0732">Signal</keyword>
<sequence>MKLRWFAFLVVILAGCSSKQDYRNPPWNAEVPVKRAMQWMPISEKAGAAWGVDPHLITAIIAIESGGNPNAVSKSNAIGLMQLKASTSGRDVYRRMGWRGEPTTSELKNPERNISMGAAYLSILENGPLAGIKDPQVMQYALVVSYANGAGALLRTFSSDRKKAIEKINDLDADEFFEHVVDNHPAPQAPRYIWKLQQALDAM</sequence>
<feature type="signal peptide" evidence="1">
    <location>
        <begin position="1"/>
        <end position="15"/>
    </location>
</feature>
<feature type="chain" id="PRO_1000184209" description="Endo-type membrane-bound lytic murein transglycosylase A">
    <location>
        <begin position="16"/>
        <end position="203"/>
    </location>
</feature>
<feature type="lipid moiety-binding region" description="N-palmitoyl cysteine" evidence="1">
    <location>
        <position position="16"/>
    </location>
</feature>
<feature type="lipid moiety-binding region" description="S-diacylglycerol cysteine" evidence="1">
    <location>
        <position position="16"/>
    </location>
</feature>
<name>EMTA_SALPC</name>